<keyword id="KW-0067">ATP-binding</keyword>
<keyword id="KW-0106">Calcium</keyword>
<keyword id="KW-0968">Cytoplasmic vesicle</keyword>
<keyword id="KW-0325">Glycoprotein</keyword>
<keyword id="KW-0378">Hydrolase</keyword>
<keyword id="KW-0472">Membrane</keyword>
<keyword id="KW-0547">Nucleotide-binding</keyword>
<keyword id="KW-1185">Reference proteome</keyword>
<keyword id="KW-0812">Transmembrane</keyword>
<keyword id="KW-1133">Transmembrane helix</keyword>
<protein>
    <recommendedName>
        <fullName>Probable apyrase 6</fullName>
        <shortName>AtAPY6</shortName>
        <ecNumber>3.6.1.5</ecNumber>
    </recommendedName>
    <alternativeName>
        <fullName>ATP-diphosphatase</fullName>
    </alternativeName>
    <alternativeName>
        <fullName>ATP-diphosphohydrolase</fullName>
    </alternativeName>
    <alternativeName>
        <fullName>Adenosine diphosphatase</fullName>
        <shortName>ADPase</shortName>
    </alternativeName>
    <alternativeName>
        <fullName>NTPDase</fullName>
    </alternativeName>
    <alternativeName>
        <fullName>Nucleoside triphosphate diphosphohydrolase 6</fullName>
    </alternativeName>
</protein>
<proteinExistence type="evidence at transcript level"/>
<reference key="1">
    <citation type="thesis" date="2011" institute="University of Texas" country="United States">
        <title>Functional analyses of Arabidopsis apyrases 3 through 7.</title>
        <authorList>
            <person name="Yang J."/>
        </authorList>
    </citation>
    <scope>NUCLEOTIDE SEQUENCE [MRNA]</scope>
    <scope>DISRUPTION PHENOTYPE</scope>
    <scope>SUBCELLULAR LOCATION</scope>
    <scope>TISSUE SPECIFICITY</scope>
    <scope>FUNCTION</scope>
    <source>
        <strain>cv. Columbia</strain>
    </source>
</reference>
<reference key="2">
    <citation type="journal article" date="1999" name="Nature">
        <title>Sequence and analysis of chromosome 2 of the plant Arabidopsis thaliana.</title>
        <authorList>
            <person name="Lin X."/>
            <person name="Kaul S."/>
            <person name="Rounsley S.D."/>
            <person name="Shea T.P."/>
            <person name="Benito M.-I."/>
            <person name="Town C.D."/>
            <person name="Fujii C.Y."/>
            <person name="Mason T.M."/>
            <person name="Bowman C.L."/>
            <person name="Barnstead M.E."/>
            <person name="Feldblyum T.V."/>
            <person name="Buell C.R."/>
            <person name="Ketchum K.A."/>
            <person name="Lee J.J."/>
            <person name="Ronning C.M."/>
            <person name="Koo H.L."/>
            <person name="Moffat K.S."/>
            <person name="Cronin L.A."/>
            <person name="Shen M."/>
            <person name="Pai G."/>
            <person name="Van Aken S."/>
            <person name="Umayam L."/>
            <person name="Tallon L.J."/>
            <person name="Gill J.E."/>
            <person name="Adams M.D."/>
            <person name="Carrera A.J."/>
            <person name="Creasy T.H."/>
            <person name="Goodman H.M."/>
            <person name="Somerville C.R."/>
            <person name="Copenhaver G.P."/>
            <person name="Preuss D."/>
            <person name="Nierman W.C."/>
            <person name="White O."/>
            <person name="Eisen J.A."/>
            <person name="Salzberg S.L."/>
            <person name="Fraser C.M."/>
            <person name="Venter J.C."/>
        </authorList>
    </citation>
    <scope>NUCLEOTIDE SEQUENCE [LARGE SCALE GENOMIC DNA]</scope>
    <source>
        <strain>cv. Columbia</strain>
    </source>
</reference>
<reference key="3">
    <citation type="journal article" date="2017" name="Plant J.">
        <title>Araport11: a complete reannotation of the Arabidopsis thaliana reference genome.</title>
        <authorList>
            <person name="Cheng C.Y."/>
            <person name="Krishnakumar V."/>
            <person name="Chan A.P."/>
            <person name="Thibaud-Nissen F."/>
            <person name="Schobel S."/>
            <person name="Town C.D."/>
        </authorList>
    </citation>
    <scope>GENOME REANNOTATION</scope>
    <source>
        <strain>cv. Columbia</strain>
    </source>
</reference>
<reference key="4">
    <citation type="journal article" date="2003" name="Science">
        <title>Empirical analysis of transcriptional activity in the Arabidopsis genome.</title>
        <authorList>
            <person name="Yamada K."/>
            <person name="Lim J."/>
            <person name="Dale J.M."/>
            <person name="Chen H."/>
            <person name="Shinn P."/>
            <person name="Palm C.J."/>
            <person name="Southwick A.M."/>
            <person name="Wu H.C."/>
            <person name="Kim C.J."/>
            <person name="Nguyen M."/>
            <person name="Pham P.K."/>
            <person name="Cheuk R.F."/>
            <person name="Karlin-Newmann G."/>
            <person name="Liu S.X."/>
            <person name="Lam B."/>
            <person name="Sakano H."/>
            <person name="Wu T."/>
            <person name="Yu G."/>
            <person name="Miranda M."/>
            <person name="Quach H.L."/>
            <person name="Tripp M."/>
            <person name="Chang C.H."/>
            <person name="Lee J.M."/>
            <person name="Toriumi M.J."/>
            <person name="Chan M.M."/>
            <person name="Tang C.C."/>
            <person name="Onodera C.S."/>
            <person name="Deng J.M."/>
            <person name="Akiyama K."/>
            <person name="Ansari Y."/>
            <person name="Arakawa T."/>
            <person name="Banh J."/>
            <person name="Banno F."/>
            <person name="Bowser L."/>
            <person name="Brooks S.Y."/>
            <person name="Carninci P."/>
            <person name="Chao Q."/>
            <person name="Choy N."/>
            <person name="Enju A."/>
            <person name="Goldsmith A.D."/>
            <person name="Gurjal M."/>
            <person name="Hansen N.F."/>
            <person name="Hayashizaki Y."/>
            <person name="Johnson-Hopson C."/>
            <person name="Hsuan V.W."/>
            <person name="Iida K."/>
            <person name="Karnes M."/>
            <person name="Khan S."/>
            <person name="Koesema E."/>
            <person name="Ishida J."/>
            <person name="Jiang P.X."/>
            <person name="Jones T."/>
            <person name="Kawai J."/>
            <person name="Kamiya A."/>
            <person name="Meyers C."/>
            <person name="Nakajima M."/>
            <person name="Narusaka M."/>
            <person name="Seki M."/>
            <person name="Sakurai T."/>
            <person name="Satou M."/>
            <person name="Tamse R."/>
            <person name="Vaysberg M."/>
            <person name="Wallender E.K."/>
            <person name="Wong C."/>
            <person name="Yamamura Y."/>
            <person name="Yuan S."/>
            <person name="Shinozaki K."/>
            <person name="Davis R.W."/>
            <person name="Theologis A."/>
            <person name="Ecker J.R."/>
        </authorList>
    </citation>
    <scope>NUCLEOTIDE SEQUENCE [LARGE SCALE MRNA]</scope>
    <source>
        <strain>cv. Columbia</strain>
    </source>
</reference>
<reference key="5">
    <citation type="submission" date="2005-03" db="EMBL/GenBank/DDBJ databases">
        <title>Large-scale analysis of RIKEN Arabidopsis full-length (RAFL) cDNAs.</title>
        <authorList>
            <person name="Totoki Y."/>
            <person name="Seki M."/>
            <person name="Ishida J."/>
            <person name="Nakajima M."/>
            <person name="Enju A."/>
            <person name="Kamiya A."/>
            <person name="Narusaka M."/>
            <person name="Shin-i T."/>
            <person name="Nakagawa M."/>
            <person name="Sakamoto N."/>
            <person name="Oishi K."/>
            <person name="Kohara Y."/>
            <person name="Kobayashi M."/>
            <person name="Toyoda A."/>
            <person name="Sakaki Y."/>
            <person name="Sakurai T."/>
            <person name="Iida K."/>
            <person name="Akiyama K."/>
            <person name="Satou M."/>
            <person name="Toyoda T."/>
            <person name="Konagaya A."/>
            <person name="Carninci P."/>
            <person name="Kawai J."/>
            <person name="Hayashizaki Y."/>
            <person name="Shinozaki K."/>
        </authorList>
    </citation>
    <scope>NUCLEOTIDE SEQUENCE [LARGE SCALE MRNA] OF 442-555</scope>
    <source>
        <strain>cv. Columbia</strain>
    </source>
</reference>
<comment type="function">
    <text evidence="1 4">Catalyzes the hydrolysis of phosphoanhydride bonds of nucleoside tri- and di-phosphates (By similarity). Involved in the regulation of pollen and anther development.</text>
</comment>
<comment type="catalytic activity">
    <reaction>
        <text>a ribonucleoside 5'-triphosphate + 2 H2O = a ribonucleoside 5'-phosphate + 2 phosphate + 2 H(+)</text>
        <dbReference type="Rhea" id="RHEA:36795"/>
        <dbReference type="ChEBI" id="CHEBI:15377"/>
        <dbReference type="ChEBI" id="CHEBI:15378"/>
        <dbReference type="ChEBI" id="CHEBI:43474"/>
        <dbReference type="ChEBI" id="CHEBI:58043"/>
        <dbReference type="ChEBI" id="CHEBI:61557"/>
        <dbReference type="EC" id="3.6.1.5"/>
    </reaction>
</comment>
<comment type="cofactor">
    <cofactor evidence="1">
        <name>Ca(2+)</name>
        <dbReference type="ChEBI" id="CHEBI:29108"/>
    </cofactor>
</comment>
<comment type="subcellular location">
    <subcellularLocation>
        <location evidence="4">Cytoplasmic vesicle membrane</location>
        <topology evidence="4">Multi-pass membrane protein</topology>
    </subcellularLocation>
</comment>
<comment type="tissue specificity">
    <text evidence="4">Detected in mature pollen grains (at the protein level). Also expressed in the veins and hydathode regions of rosette leaves.</text>
</comment>
<comment type="disruption phenotype">
    <text evidence="4">No visible phenotype. Apy6 and dapy7 double mutant exhibits late anther dehiscence and low male fertility. Pollen grains of double mutant are largely deformed in shape and in most cases, the cell walls of the pollen grains are interconnected.</text>
</comment>
<comment type="similarity">
    <text evidence="5">Belongs to the GDA1/CD39 NTPase family.</text>
</comment>
<dbReference type="EC" id="3.6.1.5"/>
<dbReference type="EMBL" id="JF830011">
    <property type="protein sequence ID" value="AEJ38087.1"/>
    <property type="molecule type" value="mRNA"/>
</dbReference>
<dbReference type="EMBL" id="AC004138">
    <property type="protein sequence ID" value="AAC32915.2"/>
    <property type="molecule type" value="Genomic_DNA"/>
</dbReference>
<dbReference type="EMBL" id="CP002685">
    <property type="protein sequence ID" value="AEC05650.1"/>
    <property type="molecule type" value="Genomic_DNA"/>
</dbReference>
<dbReference type="EMBL" id="AF387012">
    <property type="protein sequence ID" value="AAK62457.1"/>
    <property type="molecule type" value="mRNA"/>
</dbReference>
<dbReference type="EMBL" id="AK222142">
    <property type="protein sequence ID" value="BAD95196.1"/>
    <property type="molecule type" value="mRNA"/>
</dbReference>
<dbReference type="PIR" id="G84442">
    <property type="entry name" value="G84442"/>
</dbReference>
<dbReference type="RefSeq" id="NP_565293.1">
    <property type="nucleotide sequence ID" value="NM_126349.3"/>
</dbReference>
<dbReference type="SMR" id="O80612"/>
<dbReference type="FunCoup" id="O80612">
    <property type="interactions" value="1195"/>
</dbReference>
<dbReference type="STRING" id="3702.O80612"/>
<dbReference type="GlyCosmos" id="O80612">
    <property type="glycosylation" value="2 sites, No reported glycans"/>
</dbReference>
<dbReference type="GlyGen" id="O80612">
    <property type="glycosylation" value="2 sites"/>
</dbReference>
<dbReference type="PaxDb" id="3702-AT2G02970.1"/>
<dbReference type="ProteomicsDB" id="244442"/>
<dbReference type="EnsemblPlants" id="AT2G02970.1">
    <property type="protein sequence ID" value="AT2G02970.1"/>
    <property type="gene ID" value="AT2G02970"/>
</dbReference>
<dbReference type="GeneID" id="814826"/>
<dbReference type="Gramene" id="AT2G02970.1">
    <property type="protein sequence ID" value="AT2G02970.1"/>
    <property type="gene ID" value="AT2G02970"/>
</dbReference>
<dbReference type="KEGG" id="ath:AT2G02970"/>
<dbReference type="Araport" id="AT2G02970"/>
<dbReference type="TAIR" id="AT2G02970">
    <property type="gene designation" value="APY6"/>
</dbReference>
<dbReference type="eggNOG" id="KOG1386">
    <property type="taxonomic scope" value="Eukaryota"/>
</dbReference>
<dbReference type="HOGENOM" id="CLU_010246_5_1_1"/>
<dbReference type="InParanoid" id="O80612"/>
<dbReference type="OMA" id="CAVSNFV"/>
<dbReference type="PhylomeDB" id="O80612"/>
<dbReference type="BioCyc" id="ARA:AT2G02970-MONOMER"/>
<dbReference type="BRENDA" id="3.6.1.5">
    <property type="organism ID" value="399"/>
</dbReference>
<dbReference type="PRO" id="PR:O80612"/>
<dbReference type="Proteomes" id="UP000006548">
    <property type="component" value="Chromosome 2"/>
</dbReference>
<dbReference type="ExpressionAtlas" id="O80612">
    <property type="expression patterns" value="baseline and differential"/>
</dbReference>
<dbReference type="GO" id="GO:0030659">
    <property type="term" value="C:cytoplasmic vesicle membrane"/>
    <property type="evidence" value="ECO:0007669"/>
    <property type="project" value="UniProtKB-SubCell"/>
</dbReference>
<dbReference type="GO" id="GO:0004050">
    <property type="term" value="F:apyrase activity"/>
    <property type="evidence" value="ECO:0007669"/>
    <property type="project" value="UniProtKB-EC"/>
</dbReference>
<dbReference type="GO" id="GO:0005524">
    <property type="term" value="F:ATP binding"/>
    <property type="evidence" value="ECO:0007669"/>
    <property type="project" value="UniProtKB-KW"/>
</dbReference>
<dbReference type="GO" id="GO:0009901">
    <property type="term" value="P:anther dehiscence"/>
    <property type="evidence" value="ECO:0000316"/>
    <property type="project" value="TAIR"/>
</dbReference>
<dbReference type="GO" id="GO:0010584">
    <property type="term" value="P:pollen exine formation"/>
    <property type="evidence" value="ECO:0000315"/>
    <property type="project" value="TAIR"/>
</dbReference>
<dbReference type="CDD" id="cd24042">
    <property type="entry name" value="ASKHA_NBD_AtAPY3-like"/>
    <property type="match status" value="1"/>
</dbReference>
<dbReference type="FunFam" id="3.30.420.150:FF:000018">
    <property type="entry name" value="Probable apyrase 6"/>
    <property type="match status" value="1"/>
</dbReference>
<dbReference type="FunFam" id="3.30.420.40:FF:000398">
    <property type="entry name" value="Probable apyrase 6"/>
    <property type="match status" value="1"/>
</dbReference>
<dbReference type="Gene3D" id="3.30.420.40">
    <property type="match status" value="1"/>
</dbReference>
<dbReference type="Gene3D" id="3.30.420.150">
    <property type="entry name" value="Exopolyphosphatase. Domain 2"/>
    <property type="match status" value="1"/>
</dbReference>
<dbReference type="InterPro" id="IPR000407">
    <property type="entry name" value="GDA1_CD39_NTPase"/>
</dbReference>
<dbReference type="PANTHER" id="PTHR11782">
    <property type="entry name" value="ADENOSINE/GUANOSINE DIPHOSPHATASE"/>
    <property type="match status" value="1"/>
</dbReference>
<dbReference type="PANTHER" id="PTHR11782:SF3">
    <property type="entry name" value="APYRASE 6-RELATED"/>
    <property type="match status" value="1"/>
</dbReference>
<dbReference type="Pfam" id="PF01150">
    <property type="entry name" value="GDA1_CD39"/>
    <property type="match status" value="1"/>
</dbReference>
<sequence length="555" mass="61288">MRRSHARSRVKNSSSSKSDMDPIKFQIRSGNRAPSSSSTYTLTKPNSKHAKSNLLLTVGSISVVLGVLFLCYSILFSGGNLRGSLRYSVVIDGGSTGTRIHVFGYRIESGKPVFEFRGANYASLKLHPGLSAFADDPDGASVSLTELVEFAKGRVPKGMWIETEVRLMATAGMRLLELPVQEKILGVARRVLKSSGFLFRDEWASVISGSDEGVYAWVVANFALGSLGGDPLKTTGIVELGGASAQVTFVSSEPMPPEFSRTISFGNVTYNLYSHSFLHFGQNAAHDKLWGSLLSRDHNSAVEPTREKIFTDPCAPKGYNLDANTQKHLSGLLAEESRLSDSFQAGGNYSQCRSAALTILQDGNEKCSYQHCSIGSTFTPKLRGRFLATENFFYTSKFFGLGEKAWLSNMISAGERFCGEDWSKLRVKDPSLHEEDLLRYCFSSAYIVSLLHDTLGIPLDDERIGYANQAGDIPLDWALGAFIQQTATETSQHAASGNLHWFHALFSNHPKTLHYLIGIPILMTVLVYLVTKWRKPQLKTIYDLEKGRYIVTRIR</sequence>
<organism>
    <name type="scientific">Arabidopsis thaliana</name>
    <name type="common">Mouse-ear cress</name>
    <dbReference type="NCBI Taxonomy" id="3702"/>
    <lineage>
        <taxon>Eukaryota</taxon>
        <taxon>Viridiplantae</taxon>
        <taxon>Streptophyta</taxon>
        <taxon>Embryophyta</taxon>
        <taxon>Tracheophyta</taxon>
        <taxon>Spermatophyta</taxon>
        <taxon>Magnoliopsida</taxon>
        <taxon>eudicotyledons</taxon>
        <taxon>Gunneridae</taxon>
        <taxon>Pentapetalae</taxon>
        <taxon>rosids</taxon>
        <taxon>malvids</taxon>
        <taxon>Brassicales</taxon>
        <taxon>Brassicaceae</taxon>
        <taxon>Camelineae</taxon>
        <taxon>Arabidopsis</taxon>
    </lineage>
</organism>
<accession>O80612</accession>
<accession>Q56WA2</accession>
<accession>Q94EZ2</accession>
<name>APY6_ARATH</name>
<gene>
    <name type="primary">APY6</name>
    <name type="ordered locus">At2g02970</name>
    <name type="ORF">T17M13.14</name>
</gene>
<feature type="chain" id="PRO_0000420344" description="Probable apyrase 6">
    <location>
        <begin position="1"/>
        <end position="555"/>
    </location>
</feature>
<feature type="topological domain" description="Cytoplasmic" evidence="2">
    <location>
        <begin position="1"/>
        <end position="55"/>
    </location>
</feature>
<feature type="transmembrane region" description="Helical" evidence="2">
    <location>
        <begin position="56"/>
        <end position="76"/>
    </location>
</feature>
<feature type="topological domain" description="Extracellular" evidence="2">
    <location>
        <begin position="77"/>
        <end position="512"/>
    </location>
</feature>
<feature type="transmembrane region" description="Helical" evidence="2">
    <location>
        <begin position="513"/>
        <end position="533"/>
    </location>
</feature>
<feature type="topological domain" description="Cytoplasmic" evidence="2">
    <location>
        <begin position="534"/>
        <end position="555"/>
    </location>
</feature>
<feature type="region of interest" description="Disordered" evidence="3">
    <location>
        <begin position="1"/>
        <end position="45"/>
    </location>
</feature>
<feature type="compositionally biased region" description="Basic residues" evidence="3">
    <location>
        <begin position="1"/>
        <end position="10"/>
    </location>
</feature>
<feature type="compositionally biased region" description="Polar residues" evidence="3">
    <location>
        <begin position="28"/>
        <end position="45"/>
    </location>
</feature>
<feature type="active site" description="Proton acceptor" evidence="1">
    <location>
        <position position="212"/>
    </location>
</feature>
<feature type="binding site" evidence="5">
    <location>
        <begin position="89"/>
        <end position="99"/>
    </location>
    <ligand>
        <name>ATP</name>
        <dbReference type="ChEBI" id="CHEBI:30616"/>
    </ligand>
</feature>
<feature type="binding site" evidence="5">
    <location>
        <begin position="236"/>
        <end position="246"/>
    </location>
    <ligand>
        <name>ATP</name>
        <dbReference type="ChEBI" id="CHEBI:30616"/>
    </ligand>
</feature>
<feature type="glycosylation site" description="N-linked (GlcNAc...) asparagine" evidence="2">
    <location>
        <position position="267"/>
    </location>
</feature>
<feature type="glycosylation site" description="N-linked (GlcNAc...) asparagine" evidence="2">
    <location>
        <position position="348"/>
    </location>
</feature>
<feature type="sequence conflict" description="In Ref. 4; AAK62457." evidence="5" ref="4">
    <original>P</original>
    <variation>Q</variation>
    <location>
        <position position="254"/>
    </location>
</feature>
<evidence type="ECO:0000250" key="1"/>
<evidence type="ECO:0000255" key="2"/>
<evidence type="ECO:0000256" key="3">
    <source>
        <dbReference type="SAM" id="MobiDB-lite"/>
    </source>
</evidence>
<evidence type="ECO:0000269" key="4">
    <source ref="1"/>
</evidence>
<evidence type="ECO:0000305" key="5"/>